<evidence type="ECO:0000255" key="1">
    <source>
        <dbReference type="HAMAP-Rule" id="MF_01026"/>
    </source>
</evidence>
<protein>
    <recommendedName>
        <fullName evidence="1">3-isopropylmalate dehydratase large subunit</fullName>
        <ecNumber evidence="1">4.2.1.33</ecNumber>
    </recommendedName>
    <alternativeName>
        <fullName evidence="1">Alpha-IPM isomerase</fullName>
        <shortName evidence="1">IPMI</shortName>
    </alternativeName>
    <alternativeName>
        <fullName evidence="1">Isopropylmalate isomerase</fullName>
    </alternativeName>
</protein>
<organism>
    <name type="scientific">Methylorubrum extorquens (strain CM4 / NCIMB 13688)</name>
    <name type="common">Methylobacterium extorquens</name>
    <dbReference type="NCBI Taxonomy" id="440085"/>
    <lineage>
        <taxon>Bacteria</taxon>
        <taxon>Pseudomonadati</taxon>
        <taxon>Pseudomonadota</taxon>
        <taxon>Alphaproteobacteria</taxon>
        <taxon>Hyphomicrobiales</taxon>
        <taxon>Methylobacteriaceae</taxon>
        <taxon>Methylorubrum</taxon>
    </lineage>
</organism>
<accession>B7KRK4</accession>
<feature type="chain" id="PRO_1000149368" description="3-isopropylmalate dehydratase large subunit">
    <location>
        <begin position="1"/>
        <end position="469"/>
    </location>
</feature>
<feature type="binding site" evidence="1">
    <location>
        <position position="349"/>
    </location>
    <ligand>
        <name>[4Fe-4S] cluster</name>
        <dbReference type="ChEBI" id="CHEBI:49883"/>
    </ligand>
</feature>
<feature type="binding site" evidence="1">
    <location>
        <position position="409"/>
    </location>
    <ligand>
        <name>[4Fe-4S] cluster</name>
        <dbReference type="ChEBI" id="CHEBI:49883"/>
    </ligand>
</feature>
<feature type="binding site" evidence="1">
    <location>
        <position position="412"/>
    </location>
    <ligand>
        <name>[4Fe-4S] cluster</name>
        <dbReference type="ChEBI" id="CHEBI:49883"/>
    </ligand>
</feature>
<sequence>MTAPRTLYDKIWDDHVVDVEPDGSALLYIDRHLVHEVTSPQAFEGLRVAGRTVRAPHKTLAVVDHNVQTSDRSKGIEDPESRTQLEALAENVRDFGIEFYDALDQRQGIVHIIGPEQGFTLPGQTIVCGDSHTSTHGAFGALAHGIGTSEVEHVLATQTLIQRKAKNMRVTVDGTLPRGVSAKDIVLAIIGEIGTAGGTGHVIEYAGEAIRALSMEGRMTICNMSIEGGARAGMVAPDETTYAYVNGRPKAPKGAAFDAARRYWESLATDEGAHFDREIRLDAANLPPLVSWGTSPEDIVSILGTVPDPAQIADENKRQSKEKALAYMGLTPGTRMTDVTLDRVFIGSCTNGRIEDLRIVAKMVEGRKVHDSVSAMVVPGSGLVKAQAEAEGIDRILKDAGFDWREPGCSMCLGMNPDKLRPGERCASTSNRNFEGRQGPRGRTHLVSPAMAAAAAVAGRFVDIREWRG</sequence>
<proteinExistence type="inferred from homology"/>
<name>LEUC_METC4</name>
<gene>
    <name evidence="1" type="primary">leuC</name>
    <name type="ordered locus">Mchl_4757</name>
</gene>
<keyword id="KW-0004">4Fe-4S</keyword>
<keyword id="KW-0028">Amino-acid biosynthesis</keyword>
<keyword id="KW-0100">Branched-chain amino acid biosynthesis</keyword>
<keyword id="KW-0408">Iron</keyword>
<keyword id="KW-0411">Iron-sulfur</keyword>
<keyword id="KW-0432">Leucine biosynthesis</keyword>
<keyword id="KW-0456">Lyase</keyword>
<keyword id="KW-0479">Metal-binding</keyword>
<dbReference type="EC" id="4.2.1.33" evidence="1"/>
<dbReference type="EMBL" id="CP001298">
    <property type="protein sequence ID" value="ACK85531.1"/>
    <property type="molecule type" value="Genomic_DNA"/>
</dbReference>
<dbReference type="RefSeq" id="WP_015824467.1">
    <property type="nucleotide sequence ID" value="NC_011757.1"/>
</dbReference>
<dbReference type="SMR" id="B7KRK4"/>
<dbReference type="GeneID" id="72992103"/>
<dbReference type="KEGG" id="mch:Mchl_4757"/>
<dbReference type="HOGENOM" id="CLU_006714_3_4_5"/>
<dbReference type="UniPathway" id="UPA00048">
    <property type="reaction ID" value="UER00071"/>
</dbReference>
<dbReference type="Proteomes" id="UP000002385">
    <property type="component" value="Chromosome"/>
</dbReference>
<dbReference type="GO" id="GO:0003861">
    <property type="term" value="F:3-isopropylmalate dehydratase activity"/>
    <property type="evidence" value="ECO:0007669"/>
    <property type="project" value="UniProtKB-UniRule"/>
</dbReference>
<dbReference type="GO" id="GO:0051539">
    <property type="term" value="F:4 iron, 4 sulfur cluster binding"/>
    <property type="evidence" value="ECO:0007669"/>
    <property type="project" value="UniProtKB-KW"/>
</dbReference>
<dbReference type="GO" id="GO:0046872">
    <property type="term" value="F:metal ion binding"/>
    <property type="evidence" value="ECO:0007669"/>
    <property type="project" value="UniProtKB-KW"/>
</dbReference>
<dbReference type="GO" id="GO:0009098">
    <property type="term" value="P:L-leucine biosynthetic process"/>
    <property type="evidence" value="ECO:0007669"/>
    <property type="project" value="UniProtKB-UniRule"/>
</dbReference>
<dbReference type="CDD" id="cd01583">
    <property type="entry name" value="IPMI"/>
    <property type="match status" value="1"/>
</dbReference>
<dbReference type="FunFam" id="3.30.499.10:FF:000006">
    <property type="entry name" value="3-isopropylmalate dehydratase large subunit"/>
    <property type="match status" value="1"/>
</dbReference>
<dbReference type="FunFam" id="3.30.499.10:FF:000007">
    <property type="entry name" value="3-isopropylmalate dehydratase large subunit"/>
    <property type="match status" value="1"/>
</dbReference>
<dbReference type="Gene3D" id="3.30.499.10">
    <property type="entry name" value="Aconitase, domain 3"/>
    <property type="match status" value="2"/>
</dbReference>
<dbReference type="HAMAP" id="MF_01026">
    <property type="entry name" value="LeuC_type1"/>
    <property type="match status" value="1"/>
</dbReference>
<dbReference type="InterPro" id="IPR004430">
    <property type="entry name" value="3-IsopropMal_deHydase_lsu"/>
</dbReference>
<dbReference type="InterPro" id="IPR015931">
    <property type="entry name" value="Acnase/IPM_dHydase_lsu_aba_1/3"/>
</dbReference>
<dbReference type="InterPro" id="IPR001030">
    <property type="entry name" value="Acoase/IPM_deHydtase_lsu_aba"/>
</dbReference>
<dbReference type="InterPro" id="IPR018136">
    <property type="entry name" value="Aconitase_4Fe-4S_BS"/>
</dbReference>
<dbReference type="InterPro" id="IPR036008">
    <property type="entry name" value="Aconitase_4Fe-4S_dom"/>
</dbReference>
<dbReference type="InterPro" id="IPR050067">
    <property type="entry name" value="IPM_dehydratase_rel_enz"/>
</dbReference>
<dbReference type="InterPro" id="IPR033941">
    <property type="entry name" value="IPMI_cat"/>
</dbReference>
<dbReference type="NCBIfam" id="TIGR00170">
    <property type="entry name" value="leuC"/>
    <property type="match status" value="1"/>
</dbReference>
<dbReference type="NCBIfam" id="NF004016">
    <property type="entry name" value="PRK05478.1"/>
    <property type="match status" value="1"/>
</dbReference>
<dbReference type="NCBIfam" id="NF009116">
    <property type="entry name" value="PRK12466.1"/>
    <property type="match status" value="1"/>
</dbReference>
<dbReference type="PANTHER" id="PTHR43822:SF9">
    <property type="entry name" value="3-ISOPROPYLMALATE DEHYDRATASE"/>
    <property type="match status" value="1"/>
</dbReference>
<dbReference type="PANTHER" id="PTHR43822">
    <property type="entry name" value="HOMOACONITASE, MITOCHONDRIAL-RELATED"/>
    <property type="match status" value="1"/>
</dbReference>
<dbReference type="Pfam" id="PF00330">
    <property type="entry name" value="Aconitase"/>
    <property type="match status" value="1"/>
</dbReference>
<dbReference type="PRINTS" id="PR00415">
    <property type="entry name" value="ACONITASE"/>
</dbReference>
<dbReference type="SUPFAM" id="SSF53732">
    <property type="entry name" value="Aconitase iron-sulfur domain"/>
    <property type="match status" value="1"/>
</dbReference>
<dbReference type="PROSITE" id="PS00450">
    <property type="entry name" value="ACONITASE_1"/>
    <property type="match status" value="1"/>
</dbReference>
<dbReference type="PROSITE" id="PS01244">
    <property type="entry name" value="ACONITASE_2"/>
    <property type="match status" value="1"/>
</dbReference>
<comment type="function">
    <text evidence="1">Catalyzes the isomerization between 2-isopropylmalate and 3-isopropylmalate, via the formation of 2-isopropylmaleate.</text>
</comment>
<comment type="catalytic activity">
    <reaction evidence="1">
        <text>(2R,3S)-3-isopropylmalate = (2S)-2-isopropylmalate</text>
        <dbReference type="Rhea" id="RHEA:32287"/>
        <dbReference type="ChEBI" id="CHEBI:1178"/>
        <dbReference type="ChEBI" id="CHEBI:35121"/>
        <dbReference type="EC" id="4.2.1.33"/>
    </reaction>
</comment>
<comment type="cofactor">
    <cofactor evidence="1">
        <name>[4Fe-4S] cluster</name>
        <dbReference type="ChEBI" id="CHEBI:49883"/>
    </cofactor>
    <text evidence="1">Binds 1 [4Fe-4S] cluster per subunit.</text>
</comment>
<comment type="pathway">
    <text evidence="1">Amino-acid biosynthesis; L-leucine biosynthesis; L-leucine from 3-methyl-2-oxobutanoate: step 2/4.</text>
</comment>
<comment type="subunit">
    <text evidence="1">Heterodimer of LeuC and LeuD.</text>
</comment>
<comment type="similarity">
    <text evidence="1">Belongs to the aconitase/IPM isomerase family. LeuC type 1 subfamily.</text>
</comment>
<reference key="1">
    <citation type="submission" date="2008-12" db="EMBL/GenBank/DDBJ databases">
        <title>Complete sequence of chromosome of Methylobacterium chloromethanicum CM4.</title>
        <authorList>
            <consortium name="US DOE Joint Genome Institute"/>
            <person name="Lucas S."/>
            <person name="Copeland A."/>
            <person name="Lapidus A."/>
            <person name="Glavina del Rio T."/>
            <person name="Dalin E."/>
            <person name="Tice H."/>
            <person name="Bruce D."/>
            <person name="Goodwin L."/>
            <person name="Pitluck S."/>
            <person name="Chertkov O."/>
            <person name="Brettin T."/>
            <person name="Detter J.C."/>
            <person name="Han C."/>
            <person name="Larimer F."/>
            <person name="Land M."/>
            <person name="Hauser L."/>
            <person name="Kyrpides N."/>
            <person name="Mikhailova N."/>
            <person name="Marx C."/>
            <person name="Richardson P."/>
        </authorList>
    </citation>
    <scope>NUCLEOTIDE SEQUENCE [LARGE SCALE GENOMIC DNA]</scope>
    <source>
        <strain>CM4 / NCIMB 13688</strain>
    </source>
</reference>